<sequence>MLATIDPIALRLGPISIHWYAICIVSGLLLAVYLAQRLAPEKGINPEHILDFILLAFPIAIVGARLYYVIFQWSYYSQNPSEIFAIWNGGIAIYGGLIAGAAVLYWFAKRHAIAVLDFLDIAAPGVMIAQSIGRWGNFVNQEAYGKAVSQLNYLPEIIRQQMFIDGSYRVPTFLYESLWNLVGFSIILGLRYFNKGLRQGDVTSFYLIWYGLGRFVIEGMRTDSLMFAGLRVSQWVSISIIILGAVLLYFRKQRQKADYKMKN</sequence>
<organism>
    <name type="scientific">Streptococcus thermophilus (strain ATCC BAA-250 / LMG 18311)</name>
    <dbReference type="NCBI Taxonomy" id="264199"/>
    <lineage>
        <taxon>Bacteria</taxon>
        <taxon>Bacillati</taxon>
        <taxon>Bacillota</taxon>
        <taxon>Bacilli</taxon>
        <taxon>Lactobacillales</taxon>
        <taxon>Streptococcaceae</taxon>
        <taxon>Streptococcus</taxon>
    </lineage>
</organism>
<comment type="function">
    <text evidence="1">Catalyzes the transfer of the diacylglyceryl group from phosphatidylglycerol to the sulfhydryl group of the N-terminal cysteine of a prolipoprotein, the first step in the formation of mature lipoproteins.</text>
</comment>
<comment type="catalytic activity">
    <reaction evidence="1">
        <text>L-cysteinyl-[prolipoprotein] + a 1,2-diacyl-sn-glycero-3-phospho-(1'-sn-glycerol) = an S-1,2-diacyl-sn-glyceryl-L-cysteinyl-[prolipoprotein] + sn-glycerol 1-phosphate + H(+)</text>
        <dbReference type="Rhea" id="RHEA:56712"/>
        <dbReference type="Rhea" id="RHEA-COMP:14679"/>
        <dbReference type="Rhea" id="RHEA-COMP:14680"/>
        <dbReference type="ChEBI" id="CHEBI:15378"/>
        <dbReference type="ChEBI" id="CHEBI:29950"/>
        <dbReference type="ChEBI" id="CHEBI:57685"/>
        <dbReference type="ChEBI" id="CHEBI:64716"/>
        <dbReference type="ChEBI" id="CHEBI:140658"/>
        <dbReference type="EC" id="2.5.1.145"/>
    </reaction>
</comment>
<comment type="pathway">
    <text evidence="1">Protein modification; lipoprotein biosynthesis (diacylglyceryl transfer).</text>
</comment>
<comment type="subcellular location">
    <subcellularLocation>
        <location evidence="1">Cell membrane</location>
        <topology evidence="1">Multi-pass membrane protein</topology>
    </subcellularLocation>
</comment>
<comment type="similarity">
    <text evidence="1">Belongs to the Lgt family.</text>
</comment>
<protein>
    <recommendedName>
        <fullName evidence="1">Phosphatidylglycerol--prolipoprotein diacylglyceryl transferase</fullName>
        <ecNumber evidence="1">2.5.1.145</ecNumber>
    </recommendedName>
</protein>
<dbReference type="EC" id="2.5.1.145" evidence="1"/>
<dbReference type="EMBL" id="CP000023">
    <property type="protein sequence ID" value="AAV60372.1"/>
    <property type="molecule type" value="Genomic_DNA"/>
</dbReference>
<dbReference type="RefSeq" id="WP_011225734.1">
    <property type="nucleotide sequence ID" value="NC_006448.1"/>
</dbReference>
<dbReference type="SMR" id="Q5M532"/>
<dbReference type="STRING" id="264199.stu0667"/>
<dbReference type="KEGG" id="stl:stu0667"/>
<dbReference type="eggNOG" id="COG0682">
    <property type="taxonomic scope" value="Bacteria"/>
</dbReference>
<dbReference type="HOGENOM" id="CLU_013386_0_1_9"/>
<dbReference type="UniPathway" id="UPA00664"/>
<dbReference type="Proteomes" id="UP000001170">
    <property type="component" value="Chromosome"/>
</dbReference>
<dbReference type="GO" id="GO:0005886">
    <property type="term" value="C:plasma membrane"/>
    <property type="evidence" value="ECO:0007669"/>
    <property type="project" value="UniProtKB-SubCell"/>
</dbReference>
<dbReference type="GO" id="GO:0008961">
    <property type="term" value="F:phosphatidylglycerol-prolipoprotein diacylglyceryl transferase activity"/>
    <property type="evidence" value="ECO:0007669"/>
    <property type="project" value="UniProtKB-UniRule"/>
</dbReference>
<dbReference type="GO" id="GO:0042158">
    <property type="term" value="P:lipoprotein biosynthetic process"/>
    <property type="evidence" value="ECO:0007669"/>
    <property type="project" value="UniProtKB-UniRule"/>
</dbReference>
<dbReference type="HAMAP" id="MF_01147">
    <property type="entry name" value="Lgt"/>
    <property type="match status" value="1"/>
</dbReference>
<dbReference type="InterPro" id="IPR001640">
    <property type="entry name" value="Lgt"/>
</dbReference>
<dbReference type="NCBIfam" id="TIGR00544">
    <property type="entry name" value="lgt"/>
    <property type="match status" value="1"/>
</dbReference>
<dbReference type="PANTHER" id="PTHR30589:SF0">
    <property type="entry name" value="PHOSPHATIDYLGLYCEROL--PROLIPOPROTEIN DIACYLGLYCERYL TRANSFERASE"/>
    <property type="match status" value="1"/>
</dbReference>
<dbReference type="PANTHER" id="PTHR30589">
    <property type="entry name" value="PROLIPOPROTEIN DIACYLGLYCERYL TRANSFERASE"/>
    <property type="match status" value="1"/>
</dbReference>
<dbReference type="Pfam" id="PF01790">
    <property type="entry name" value="LGT"/>
    <property type="match status" value="1"/>
</dbReference>
<dbReference type="PROSITE" id="PS01311">
    <property type="entry name" value="LGT"/>
    <property type="match status" value="1"/>
</dbReference>
<keyword id="KW-1003">Cell membrane</keyword>
<keyword id="KW-0472">Membrane</keyword>
<keyword id="KW-1185">Reference proteome</keyword>
<keyword id="KW-0808">Transferase</keyword>
<keyword id="KW-0812">Transmembrane</keyword>
<keyword id="KW-1133">Transmembrane helix</keyword>
<name>LGT_STRT2</name>
<evidence type="ECO:0000255" key="1">
    <source>
        <dbReference type="HAMAP-Rule" id="MF_01147"/>
    </source>
</evidence>
<feature type="chain" id="PRO_0000172695" description="Phosphatidylglycerol--prolipoprotein diacylglyceryl transferase">
    <location>
        <begin position="1"/>
        <end position="263"/>
    </location>
</feature>
<feature type="transmembrane region" description="Helical" evidence="1">
    <location>
        <begin position="15"/>
        <end position="35"/>
    </location>
</feature>
<feature type="transmembrane region" description="Helical" evidence="1">
    <location>
        <begin position="52"/>
        <end position="72"/>
    </location>
</feature>
<feature type="transmembrane region" description="Helical" evidence="1">
    <location>
        <begin position="83"/>
        <end position="103"/>
    </location>
</feature>
<feature type="transmembrane region" description="Helical" evidence="1">
    <location>
        <begin position="112"/>
        <end position="132"/>
    </location>
</feature>
<feature type="transmembrane region" description="Helical" evidence="1">
    <location>
        <begin position="170"/>
        <end position="190"/>
    </location>
</feature>
<feature type="transmembrane region" description="Helical" evidence="1">
    <location>
        <begin position="200"/>
        <end position="220"/>
    </location>
</feature>
<feature type="transmembrane region" description="Helical" evidence="1">
    <location>
        <begin position="230"/>
        <end position="250"/>
    </location>
</feature>
<feature type="binding site" evidence="1">
    <location>
        <position position="134"/>
    </location>
    <ligand>
        <name>a 1,2-diacyl-sn-glycero-3-phospho-(1'-sn-glycerol)</name>
        <dbReference type="ChEBI" id="CHEBI:64716"/>
    </ligand>
</feature>
<reference key="1">
    <citation type="journal article" date="2004" name="Nat. Biotechnol.">
        <title>Complete sequence and comparative genome analysis of the dairy bacterium Streptococcus thermophilus.</title>
        <authorList>
            <person name="Bolotin A."/>
            <person name="Quinquis B."/>
            <person name="Renault P."/>
            <person name="Sorokin A."/>
            <person name="Ehrlich S.D."/>
            <person name="Kulakauskas S."/>
            <person name="Lapidus A."/>
            <person name="Goltsman E."/>
            <person name="Mazur M."/>
            <person name="Pusch G.D."/>
            <person name="Fonstein M."/>
            <person name="Overbeek R."/>
            <person name="Kyprides N."/>
            <person name="Purnelle B."/>
            <person name="Prozzi D."/>
            <person name="Ngui K."/>
            <person name="Masuy D."/>
            <person name="Hancy F."/>
            <person name="Burteau S."/>
            <person name="Boutry M."/>
            <person name="Delcour J."/>
            <person name="Goffeau A."/>
            <person name="Hols P."/>
        </authorList>
    </citation>
    <scope>NUCLEOTIDE SEQUENCE [LARGE SCALE GENOMIC DNA]</scope>
    <source>
        <strain>ATCC BAA-250 / LMG 18311</strain>
    </source>
</reference>
<gene>
    <name evidence="1" type="primary">lgt</name>
    <name type="ordered locus">stu0667</name>
</gene>
<accession>Q5M532</accession>
<proteinExistence type="inferred from homology"/>